<accession>Q9UKL3</accession>
<accession>A2RUB7</accession>
<accession>E1P553</accession>
<accession>Q6PH76</accession>
<accession>Q7LCQ7</accession>
<accession>Q86YD9</accession>
<accession>Q9NUQ4</accession>
<accession>Q9NZV9</accession>
<accession>Q9P2N1</accession>
<accession>Q9Y563</accession>
<reference key="1">
    <citation type="journal article" date="1999" name="Nature">
        <title>Reply: searching for FLASH domains.</title>
        <authorList>
            <person name="Kimura T."/>
            <person name="Imai Y."/>
            <person name="Yonehara S."/>
        </authorList>
    </citation>
    <scope>NUCLEOTIDE SEQUENCE [MRNA]</scope>
    <source>
        <tissue>T-cell</tissue>
    </source>
</reference>
<reference evidence="11" key="2">
    <citation type="submission" date="2000-01" db="EMBL/GenBank/DDBJ databases">
        <title>RIP25, a human homolog of Mus musculus FLASH, is involved in IL-2 signaling.</title>
        <authorList>
            <person name="Yan M.D."/>
            <person name="Sun L.Y."/>
            <person name="Liu X.Y."/>
            <person name="Zheng Z.C."/>
        </authorList>
    </citation>
    <scope>NUCLEOTIDE SEQUENCE [MRNA]</scope>
    <source>
        <tissue evidence="11">Peripheral blood leukocyte</tissue>
    </source>
</reference>
<reference evidence="16" key="3">
    <citation type="journal article" date="2000" name="DNA Res.">
        <title>Prediction of the coding sequences of unidentified human genes. XVI. The complete sequences of 150 new cDNA clones from brain which code for large proteins in vitro.</title>
        <authorList>
            <person name="Nagase T."/>
            <person name="Kikuno R."/>
            <person name="Ishikawa K."/>
            <person name="Hirosawa M."/>
            <person name="Ohara O."/>
        </authorList>
    </citation>
    <scope>NUCLEOTIDE SEQUENCE [LARGE SCALE MRNA]</scope>
    <source>
        <tissue evidence="16">Brain</tissue>
    </source>
</reference>
<reference key="4">
    <citation type="journal article" date="2002" name="DNA Res.">
        <title>Construction of expression-ready cDNA clones for KIAA genes: manual curation of 330 KIAA cDNA clones.</title>
        <authorList>
            <person name="Nakajima D."/>
            <person name="Okazaki N."/>
            <person name="Yamakawa H."/>
            <person name="Kikuno R."/>
            <person name="Ohara O."/>
            <person name="Nagase T."/>
        </authorList>
    </citation>
    <scope>SEQUENCE REVISION</scope>
</reference>
<reference key="5">
    <citation type="journal article" date="2003" name="Nature">
        <title>The DNA sequence and analysis of human chromosome 6.</title>
        <authorList>
            <person name="Mungall A.J."/>
            <person name="Palmer S.A."/>
            <person name="Sims S.K."/>
            <person name="Edwards C.A."/>
            <person name="Ashurst J.L."/>
            <person name="Wilming L."/>
            <person name="Jones M.C."/>
            <person name="Horton R."/>
            <person name="Hunt S.E."/>
            <person name="Scott C.E."/>
            <person name="Gilbert J.G.R."/>
            <person name="Clamp M.E."/>
            <person name="Bethel G."/>
            <person name="Milne S."/>
            <person name="Ainscough R."/>
            <person name="Almeida J.P."/>
            <person name="Ambrose K.D."/>
            <person name="Andrews T.D."/>
            <person name="Ashwell R.I.S."/>
            <person name="Babbage A.K."/>
            <person name="Bagguley C.L."/>
            <person name="Bailey J."/>
            <person name="Banerjee R."/>
            <person name="Barker D.J."/>
            <person name="Barlow K.F."/>
            <person name="Bates K."/>
            <person name="Beare D.M."/>
            <person name="Beasley H."/>
            <person name="Beasley O."/>
            <person name="Bird C.P."/>
            <person name="Blakey S.E."/>
            <person name="Bray-Allen S."/>
            <person name="Brook J."/>
            <person name="Brown A.J."/>
            <person name="Brown J.Y."/>
            <person name="Burford D.C."/>
            <person name="Burrill W."/>
            <person name="Burton J."/>
            <person name="Carder C."/>
            <person name="Carter N.P."/>
            <person name="Chapman J.C."/>
            <person name="Clark S.Y."/>
            <person name="Clark G."/>
            <person name="Clee C.M."/>
            <person name="Clegg S."/>
            <person name="Cobley V."/>
            <person name="Collier R.E."/>
            <person name="Collins J.E."/>
            <person name="Colman L.K."/>
            <person name="Corby N.R."/>
            <person name="Coville G.J."/>
            <person name="Culley K.M."/>
            <person name="Dhami P."/>
            <person name="Davies J."/>
            <person name="Dunn M."/>
            <person name="Earthrowl M.E."/>
            <person name="Ellington A.E."/>
            <person name="Evans K.A."/>
            <person name="Faulkner L."/>
            <person name="Francis M.D."/>
            <person name="Frankish A."/>
            <person name="Frankland J."/>
            <person name="French L."/>
            <person name="Garner P."/>
            <person name="Garnett J."/>
            <person name="Ghori M.J."/>
            <person name="Gilby L.M."/>
            <person name="Gillson C.J."/>
            <person name="Glithero R.J."/>
            <person name="Grafham D.V."/>
            <person name="Grant M."/>
            <person name="Gribble S."/>
            <person name="Griffiths C."/>
            <person name="Griffiths M.N.D."/>
            <person name="Hall R."/>
            <person name="Halls K.S."/>
            <person name="Hammond S."/>
            <person name="Harley J.L."/>
            <person name="Hart E.A."/>
            <person name="Heath P.D."/>
            <person name="Heathcott R."/>
            <person name="Holmes S.J."/>
            <person name="Howden P.J."/>
            <person name="Howe K.L."/>
            <person name="Howell G.R."/>
            <person name="Huckle E."/>
            <person name="Humphray S.J."/>
            <person name="Humphries M.D."/>
            <person name="Hunt A.R."/>
            <person name="Johnson C.M."/>
            <person name="Joy A.A."/>
            <person name="Kay M."/>
            <person name="Keenan S.J."/>
            <person name="Kimberley A.M."/>
            <person name="King A."/>
            <person name="Laird G.K."/>
            <person name="Langford C."/>
            <person name="Lawlor S."/>
            <person name="Leongamornlert D.A."/>
            <person name="Leversha M."/>
            <person name="Lloyd C.R."/>
            <person name="Lloyd D.M."/>
            <person name="Loveland J.E."/>
            <person name="Lovell J."/>
            <person name="Martin S."/>
            <person name="Mashreghi-Mohammadi M."/>
            <person name="Maslen G.L."/>
            <person name="Matthews L."/>
            <person name="McCann O.T."/>
            <person name="McLaren S.J."/>
            <person name="McLay K."/>
            <person name="McMurray A."/>
            <person name="Moore M.J.F."/>
            <person name="Mullikin J.C."/>
            <person name="Niblett D."/>
            <person name="Nickerson T."/>
            <person name="Novik K.L."/>
            <person name="Oliver K."/>
            <person name="Overton-Larty E.K."/>
            <person name="Parker A."/>
            <person name="Patel R."/>
            <person name="Pearce A.V."/>
            <person name="Peck A.I."/>
            <person name="Phillimore B.J.C.T."/>
            <person name="Phillips S."/>
            <person name="Plumb R.W."/>
            <person name="Porter K.M."/>
            <person name="Ramsey Y."/>
            <person name="Ranby S.A."/>
            <person name="Rice C.M."/>
            <person name="Ross M.T."/>
            <person name="Searle S.M."/>
            <person name="Sehra H.K."/>
            <person name="Sheridan E."/>
            <person name="Skuce C.D."/>
            <person name="Smith S."/>
            <person name="Smith M."/>
            <person name="Spraggon L."/>
            <person name="Squares S.L."/>
            <person name="Steward C.A."/>
            <person name="Sycamore N."/>
            <person name="Tamlyn-Hall G."/>
            <person name="Tester J."/>
            <person name="Theaker A.J."/>
            <person name="Thomas D.W."/>
            <person name="Thorpe A."/>
            <person name="Tracey A."/>
            <person name="Tromans A."/>
            <person name="Tubby B."/>
            <person name="Wall M."/>
            <person name="Wallis J.M."/>
            <person name="West A.P."/>
            <person name="White S.S."/>
            <person name="Whitehead S.L."/>
            <person name="Whittaker H."/>
            <person name="Wild A."/>
            <person name="Willey D.J."/>
            <person name="Wilmer T.E."/>
            <person name="Wood J.M."/>
            <person name="Wray P.W."/>
            <person name="Wyatt J.C."/>
            <person name="Young L."/>
            <person name="Younger R.M."/>
            <person name="Bentley D.R."/>
            <person name="Coulson A."/>
            <person name="Durbin R.M."/>
            <person name="Hubbard T."/>
            <person name="Sulston J.E."/>
            <person name="Dunham I."/>
            <person name="Rogers J."/>
            <person name="Beck S."/>
        </authorList>
    </citation>
    <scope>NUCLEOTIDE SEQUENCE [LARGE SCALE GENOMIC DNA]</scope>
</reference>
<reference evidence="11" key="6">
    <citation type="submission" date="2005-09" db="EMBL/GenBank/DDBJ databases">
        <authorList>
            <person name="Mural R.J."/>
            <person name="Istrail S."/>
            <person name="Sutton G.G."/>
            <person name="Florea L."/>
            <person name="Halpern A.L."/>
            <person name="Mobarry C.M."/>
            <person name="Lippert R."/>
            <person name="Walenz B."/>
            <person name="Shatkay H."/>
            <person name="Dew I."/>
            <person name="Miller J.R."/>
            <person name="Flanigan M.J."/>
            <person name="Edwards N.J."/>
            <person name="Bolanos R."/>
            <person name="Fasulo D."/>
            <person name="Halldorsson B.V."/>
            <person name="Hannenhalli S."/>
            <person name="Turner R."/>
            <person name="Yooseph S."/>
            <person name="Lu F."/>
            <person name="Nusskern D.R."/>
            <person name="Shue B.C."/>
            <person name="Zheng X.H."/>
            <person name="Zhong F."/>
            <person name="Delcher A.L."/>
            <person name="Huson D.H."/>
            <person name="Kravitz S.A."/>
            <person name="Mouchard L."/>
            <person name="Reinert K."/>
            <person name="Remington K.A."/>
            <person name="Clark A.G."/>
            <person name="Waterman M.S."/>
            <person name="Eichler E.E."/>
            <person name="Adams M.D."/>
            <person name="Hunkapiller M.W."/>
            <person name="Myers E.W."/>
            <person name="Venter J.C."/>
        </authorList>
    </citation>
    <scope>NUCLEOTIDE SEQUENCE [LARGE SCALE GENOMIC DNA]</scope>
</reference>
<reference evidence="10 14" key="7">
    <citation type="journal article" date="2004" name="Genome Res.">
        <title>The status, quality, and expansion of the NIH full-length cDNA project: the Mammalian Gene Collection (MGC).</title>
        <authorList>
            <consortium name="The MGC Project Team"/>
        </authorList>
    </citation>
    <scope>NUCLEOTIDE SEQUENCE [LARGE SCALE MRNA]</scope>
    <source>
        <tissue evidence="13">Skin</tissue>
        <tissue evidence="14">Testis</tissue>
    </source>
</reference>
<reference evidence="10 15" key="8">
    <citation type="journal article" date="2004" name="Nat. Genet.">
        <title>Complete sequencing and characterization of 21,243 full-length human cDNAs.</title>
        <authorList>
            <person name="Ota T."/>
            <person name="Suzuki Y."/>
            <person name="Nishikawa T."/>
            <person name="Otsuki T."/>
            <person name="Sugiyama T."/>
            <person name="Irie R."/>
            <person name="Wakamatsu A."/>
            <person name="Hayashi K."/>
            <person name="Sato H."/>
            <person name="Nagai K."/>
            <person name="Kimura K."/>
            <person name="Makita H."/>
            <person name="Sekine M."/>
            <person name="Obayashi M."/>
            <person name="Nishi T."/>
            <person name="Shibahara T."/>
            <person name="Tanaka T."/>
            <person name="Ishii S."/>
            <person name="Yamamoto J."/>
            <person name="Saito K."/>
            <person name="Kawai Y."/>
            <person name="Isono Y."/>
            <person name="Nakamura Y."/>
            <person name="Nagahari K."/>
            <person name="Murakami K."/>
            <person name="Yasuda T."/>
            <person name="Iwayanagi T."/>
            <person name="Wagatsuma M."/>
            <person name="Shiratori A."/>
            <person name="Sudo H."/>
            <person name="Hosoiri T."/>
            <person name="Kaku Y."/>
            <person name="Kodaira H."/>
            <person name="Kondo H."/>
            <person name="Sugawara M."/>
            <person name="Takahashi M."/>
            <person name="Kanda K."/>
            <person name="Yokoi T."/>
            <person name="Furuya T."/>
            <person name="Kikkawa E."/>
            <person name="Omura Y."/>
            <person name="Abe K."/>
            <person name="Kamihara K."/>
            <person name="Katsuta N."/>
            <person name="Sato K."/>
            <person name="Tanikawa M."/>
            <person name="Yamazaki M."/>
            <person name="Ninomiya K."/>
            <person name="Ishibashi T."/>
            <person name="Yamashita H."/>
            <person name="Murakawa K."/>
            <person name="Fujimori K."/>
            <person name="Tanai H."/>
            <person name="Kimata M."/>
            <person name="Watanabe M."/>
            <person name="Hiraoka S."/>
            <person name="Chiba Y."/>
            <person name="Ishida S."/>
            <person name="Ono Y."/>
            <person name="Takiguchi S."/>
            <person name="Watanabe S."/>
            <person name="Yosida M."/>
            <person name="Hotuta T."/>
            <person name="Kusano J."/>
            <person name="Kanehori K."/>
            <person name="Takahashi-Fujii A."/>
            <person name="Hara H."/>
            <person name="Tanase T.-O."/>
            <person name="Nomura Y."/>
            <person name="Togiya S."/>
            <person name="Komai F."/>
            <person name="Hara R."/>
            <person name="Takeuchi K."/>
            <person name="Arita M."/>
            <person name="Imose N."/>
            <person name="Musashino K."/>
            <person name="Yuuki H."/>
            <person name="Oshima A."/>
            <person name="Sasaki N."/>
            <person name="Aotsuka S."/>
            <person name="Yoshikawa Y."/>
            <person name="Matsunawa H."/>
            <person name="Ichihara T."/>
            <person name="Shiohata N."/>
            <person name="Sano S."/>
            <person name="Moriya S."/>
            <person name="Momiyama H."/>
            <person name="Satoh N."/>
            <person name="Takami S."/>
            <person name="Terashima Y."/>
            <person name="Suzuki O."/>
            <person name="Nakagawa S."/>
            <person name="Senoh A."/>
            <person name="Mizoguchi H."/>
            <person name="Goto Y."/>
            <person name="Shimizu F."/>
            <person name="Wakebe H."/>
            <person name="Hishigaki H."/>
            <person name="Watanabe T."/>
            <person name="Sugiyama A."/>
            <person name="Takemoto M."/>
            <person name="Kawakami B."/>
            <person name="Yamazaki M."/>
            <person name="Watanabe K."/>
            <person name="Kumagai A."/>
            <person name="Itakura S."/>
            <person name="Fukuzumi Y."/>
            <person name="Fujimori Y."/>
            <person name="Komiyama M."/>
            <person name="Tashiro H."/>
            <person name="Tanigami A."/>
            <person name="Fujiwara T."/>
            <person name="Ono T."/>
            <person name="Yamada K."/>
            <person name="Fujii Y."/>
            <person name="Ozaki K."/>
            <person name="Hirao M."/>
            <person name="Ohmori Y."/>
            <person name="Kawabata A."/>
            <person name="Hikiji T."/>
            <person name="Kobatake N."/>
            <person name="Inagaki H."/>
            <person name="Ikema Y."/>
            <person name="Okamoto S."/>
            <person name="Okitani R."/>
            <person name="Kawakami T."/>
            <person name="Noguchi S."/>
            <person name="Itoh T."/>
            <person name="Shigeta K."/>
            <person name="Senba T."/>
            <person name="Matsumura K."/>
            <person name="Nakajima Y."/>
            <person name="Mizuno T."/>
            <person name="Morinaga M."/>
            <person name="Sasaki M."/>
            <person name="Togashi T."/>
            <person name="Oyama M."/>
            <person name="Hata H."/>
            <person name="Watanabe M."/>
            <person name="Komatsu T."/>
            <person name="Mizushima-Sugano J."/>
            <person name="Satoh T."/>
            <person name="Shirai Y."/>
            <person name="Takahashi Y."/>
            <person name="Nakagawa K."/>
            <person name="Okumura K."/>
            <person name="Nagase T."/>
            <person name="Nomura N."/>
            <person name="Kikuchi H."/>
            <person name="Masuho Y."/>
            <person name="Yamashita R."/>
            <person name="Nakai K."/>
            <person name="Yada T."/>
            <person name="Nakamura Y."/>
            <person name="Ohara O."/>
            <person name="Isogai T."/>
            <person name="Sugano S."/>
        </authorList>
    </citation>
    <scope>NUCLEOTIDE SEQUENCE [LARGE SCALE MRNA] OF 1478-1982</scope>
    <source>
        <tissue evidence="15">Placenta</tissue>
    </source>
</reference>
<reference evidence="12" key="9">
    <citation type="journal article" date="1999" name="Nature">
        <title>Apoptosis. Searching for FLASH domains.</title>
        <authorList>
            <person name="Koonin E.V."/>
            <person name="Aravind L."/>
            <person name="Hofmann K."/>
            <person name="Tschopp J."/>
            <person name="Dixit V.M."/>
        </authorList>
    </citation>
    <scope>NUCLEOTIDE SEQUENCE [MRNA] OF 714-1982</scope>
</reference>
<reference evidence="10" key="10">
    <citation type="journal article" date="2003" name="J. Biol. Chem.">
        <title>Tumor necrosis factor alpha receptor- and Fas-associated FLASH inhibit transcriptional activity of the glucocorticoid receptor by binding to and interfering with its interaction with p160 type nuclear receptor coactivators.</title>
        <authorList>
            <person name="Kino T."/>
            <person name="Chrousos G.P."/>
        </authorList>
    </citation>
    <scope>FUNCTION</scope>
    <scope>INTERACTION WITH NCOA2</scope>
    <scope>SUBCELLULAR LOCATION</scope>
    <scope>INDUCTION</scope>
</reference>
<reference evidence="10" key="11">
    <citation type="journal article" date="2004" name="J. Steroid Biochem. Mol. Biol.">
        <title>FLASH interacts with p160 coactivator subtypes and differentially suppresses transcriptional activity of steroid hormone receptors.</title>
        <authorList>
            <person name="Kino T."/>
            <person name="Ichijo T."/>
            <person name="Chrousos G.P."/>
        </authorList>
    </citation>
    <scope>FUNCTION</scope>
    <scope>INTERACTION WITH NCOA3</scope>
</reference>
<reference key="12">
    <citation type="journal article" date="2006" name="Proc. Natl. Acad. Sci. U.S.A.">
        <title>FLASH is required for histone transcription and S-phase progression.</title>
        <authorList>
            <person name="Barcaroli D."/>
            <person name="Bongiorno-Borbone L."/>
            <person name="Terrinoni A."/>
            <person name="Hofmann T.G."/>
            <person name="Rossi M."/>
            <person name="Knight R.A."/>
            <person name="Matera A.G."/>
            <person name="Melino G."/>
            <person name="De Laurenzi V."/>
        </authorList>
    </citation>
    <scope>FUNCTION</scope>
    <scope>INTERACTION WITH NPAT</scope>
    <scope>SUBCELLULAR LOCATION</scope>
</reference>
<reference key="13">
    <citation type="journal article" date="2007" name="EMBO J.">
        <title>FLASH links the CD95 signaling pathway to the cell nucleus and nuclear bodies.</title>
        <authorList>
            <person name="Milovic-Holm K."/>
            <person name="Krieghoff E."/>
            <person name="Jensen K."/>
            <person name="Will H."/>
            <person name="Hofmann T.G."/>
        </authorList>
    </citation>
    <scope>FUNCTION IN FAS-MEDIATED APOPTOSIS</scope>
    <scope>INTERACTION WITH CASP8 AND SP100</scope>
    <scope>SUBCELLULAR LOCATION</scope>
</reference>
<reference key="14">
    <citation type="journal article" date="2007" name="Science">
        <title>ATM and ATR substrate analysis reveals extensive protein networks responsive to DNA damage.</title>
        <authorList>
            <person name="Matsuoka S."/>
            <person name="Ballif B.A."/>
            <person name="Smogorzewska A."/>
            <person name="McDonald E.R. III"/>
            <person name="Hurov K.E."/>
            <person name="Luo J."/>
            <person name="Bakalarski C.E."/>
            <person name="Zhao Z."/>
            <person name="Solimini N."/>
            <person name="Lerenthal Y."/>
            <person name="Shiloh Y."/>
            <person name="Gygi S.P."/>
            <person name="Elledge S.J."/>
        </authorList>
    </citation>
    <scope>IDENTIFICATION BY MASS SPECTROMETRY [LARGE SCALE ANALYSIS]</scope>
    <source>
        <tissue>Embryonic kidney</tissue>
    </source>
</reference>
<reference key="15">
    <citation type="journal article" date="2009" name="Mol. Cell. Biol.">
        <title>Interaction of FLASH with arsenite resistance protein 2 is involved in cell cycle progression at S phase.</title>
        <authorList>
            <person name="Kiriyama M."/>
            <person name="Kobayashi Y."/>
            <person name="Saito M."/>
            <person name="Ishikawa F."/>
            <person name="Yonehara S."/>
        </authorList>
    </citation>
    <scope>INTERACTION WITH SRRT</scope>
</reference>
<reference key="16">
    <citation type="journal article" date="2009" name="Sci. Signal.">
        <title>Quantitative phosphoproteomic analysis of T cell receptor signaling reveals system-wide modulation of protein-protein interactions.</title>
        <authorList>
            <person name="Mayya V."/>
            <person name="Lundgren D.H."/>
            <person name="Hwang S.-I."/>
            <person name="Rezaul K."/>
            <person name="Wu L."/>
            <person name="Eng J.K."/>
            <person name="Rodionov V."/>
            <person name="Han D.K."/>
        </authorList>
    </citation>
    <scope>IDENTIFICATION BY MASS SPECTROMETRY [LARGE SCALE ANALYSIS]</scope>
    <source>
        <tissue>Leukemic T-cell</tissue>
    </source>
</reference>
<reference key="17">
    <citation type="journal article" date="2010" name="Sci. Signal.">
        <title>Quantitative phosphoproteomics reveals widespread full phosphorylation site occupancy during mitosis.</title>
        <authorList>
            <person name="Olsen J.V."/>
            <person name="Vermeulen M."/>
            <person name="Santamaria A."/>
            <person name="Kumar C."/>
            <person name="Miller M.L."/>
            <person name="Jensen L.J."/>
            <person name="Gnad F."/>
            <person name="Cox J."/>
            <person name="Jensen T.S."/>
            <person name="Nigg E.A."/>
            <person name="Brunak S."/>
            <person name="Mann M."/>
        </authorList>
    </citation>
    <scope>ACETYLATION [LARGE SCALE ANALYSIS] AT ALA-2</scope>
    <scope>PHOSPHORYLATION [LARGE SCALE ANALYSIS] AT SER-20</scope>
    <scope>CLEAVAGE OF INITIATOR METHIONINE [LARGE SCALE ANALYSIS]</scope>
    <scope>IDENTIFICATION BY MASS SPECTROMETRY [LARGE SCALE ANALYSIS]</scope>
    <source>
        <tissue>Cervix carcinoma</tissue>
    </source>
</reference>
<reference key="18">
    <citation type="journal article" date="2012" name="J. Biol. Chem.">
        <title>PolySUMO-binding proteins identified through a string search.</title>
        <authorList>
            <person name="Sun H."/>
            <person name="Hunter T."/>
        </authorList>
    </citation>
    <scope>IDENTIFICATION OF REPEAT SUMO-INTERACTING MOTIF</scope>
    <scope>INTERACTION WITH SUMO1 AND SUMO2</scope>
</reference>
<reference key="19">
    <citation type="journal article" date="2013" name="J. Proteome Res.">
        <title>Toward a comprehensive characterization of a human cancer cell phosphoproteome.</title>
        <authorList>
            <person name="Zhou H."/>
            <person name="Di Palma S."/>
            <person name="Preisinger C."/>
            <person name="Peng M."/>
            <person name="Polat A.N."/>
            <person name="Heck A.J."/>
            <person name="Mohammed S."/>
        </authorList>
    </citation>
    <scope>PHOSPHORYLATION [LARGE SCALE ANALYSIS] AT SER-20; SER-194; SER-567; SER-658; SER-815; SER-875; SER-940 AND SER-1161</scope>
    <scope>IDENTIFICATION BY MASS SPECTROMETRY [LARGE SCALE ANALYSIS]</scope>
    <source>
        <tissue>Cervix carcinoma</tissue>
        <tissue>Erythroleukemia</tissue>
    </source>
</reference>
<reference key="20">
    <citation type="submission" date="2012-06" db="PDB data bank">
        <title>Solution NMR structure of CASP8-associated protein 2 from Homo sapiens, Northeast structural genomics consortium (NESG) target HR8150A.</title>
        <authorList>
            <consortium name="Northeast structural genomics consortium (NESG)"/>
        </authorList>
    </citation>
    <scope>STRUCTURE BY NMR OF 1916-1982</scope>
</reference>
<dbReference type="EMBL" id="AF154415">
    <property type="protein sequence ID" value="AAF03367.1"/>
    <property type="molecule type" value="mRNA"/>
</dbReference>
<dbReference type="EMBL" id="AF164678">
    <property type="protein sequence ID" value="AAD45537.2"/>
    <property type="molecule type" value="mRNA"/>
</dbReference>
<dbReference type="EMBL" id="AB037736">
    <property type="protein sequence ID" value="BAA92553.2"/>
    <property type="molecule type" value="mRNA"/>
</dbReference>
<dbReference type="EMBL" id="AL353692">
    <property type="status" value="NOT_ANNOTATED_CDS"/>
    <property type="molecule type" value="Genomic_DNA"/>
</dbReference>
<dbReference type="EMBL" id="CH471051">
    <property type="protein sequence ID" value="EAW48540.1"/>
    <property type="molecule type" value="Genomic_DNA"/>
</dbReference>
<dbReference type="EMBL" id="CH471051">
    <property type="protein sequence ID" value="EAW48542.1"/>
    <property type="molecule type" value="Genomic_DNA"/>
</dbReference>
<dbReference type="EMBL" id="CH471051">
    <property type="protein sequence ID" value="EAW48544.1"/>
    <property type="molecule type" value="Genomic_DNA"/>
</dbReference>
<dbReference type="EMBL" id="BC042577">
    <property type="protein sequence ID" value="AAH42577.1"/>
    <property type="molecule type" value="mRNA"/>
</dbReference>
<dbReference type="EMBL" id="BC056685">
    <property type="protein sequence ID" value="AAH56685.1"/>
    <property type="status" value="ALT_SEQ"/>
    <property type="molecule type" value="mRNA"/>
</dbReference>
<dbReference type="EMBL" id="BC132828">
    <property type="protein sequence ID" value="AAI32829.1"/>
    <property type="molecule type" value="mRNA"/>
</dbReference>
<dbReference type="EMBL" id="BC132830">
    <property type="protein sequence ID" value="AAI32831.1"/>
    <property type="molecule type" value="mRNA"/>
</dbReference>
<dbReference type="EMBL" id="AK002070">
    <property type="protein sequence ID" value="BAA92067.1"/>
    <property type="status" value="ALT_INIT"/>
    <property type="molecule type" value="mRNA"/>
</dbReference>
<dbReference type="EMBL" id="AF165161">
    <property type="protein sequence ID" value="AAD45157.1"/>
    <property type="molecule type" value="mRNA"/>
</dbReference>
<dbReference type="RefSeq" id="NP_001131139.1">
    <property type="nucleotide sequence ID" value="NM_001137667.2"/>
</dbReference>
<dbReference type="RefSeq" id="NP_001131140.1">
    <property type="nucleotide sequence ID" value="NM_001137668.2"/>
</dbReference>
<dbReference type="RefSeq" id="NP_036247.1">
    <property type="nucleotide sequence ID" value="NM_012115.4"/>
</dbReference>
<dbReference type="RefSeq" id="XP_054188049.1">
    <property type="nucleotide sequence ID" value="XM_054332074.1"/>
</dbReference>
<dbReference type="RefSeq" id="XP_054188050.1">
    <property type="nucleotide sequence ID" value="XM_054332075.1"/>
</dbReference>
<dbReference type="RefSeq" id="XP_054188051.1">
    <property type="nucleotide sequence ID" value="XM_054332076.1"/>
</dbReference>
<dbReference type="RefSeq" id="XP_054212893.1">
    <property type="nucleotide sequence ID" value="XM_054356918.1"/>
</dbReference>
<dbReference type="RefSeq" id="XP_054212894.1">
    <property type="nucleotide sequence ID" value="XM_054356919.1"/>
</dbReference>
<dbReference type="RefSeq" id="XP_054212895.1">
    <property type="nucleotide sequence ID" value="XM_054356920.1"/>
</dbReference>
<dbReference type="PDB" id="2LR8">
    <property type="method" value="NMR"/>
    <property type="chains" value="A=1916-1982"/>
</dbReference>
<dbReference type="PDB" id="6ANO">
    <property type="method" value="X-ray"/>
    <property type="resolution" value="2.61 A"/>
    <property type="chains" value="A/B=51-137"/>
</dbReference>
<dbReference type="PDB" id="6AOZ">
    <property type="method" value="X-ray"/>
    <property type="resolution" value="2.10 A"/>
    <property type="chains" value="A/B/C/D=51-137"/>
</dbReference>
<dbReference type="PDB" id="6AP0">
    <property type="method" value="X-ray"/>
    <property type="resolution" value="2.58 A"/>
    <property type="chains" value="A/B=51-137"/>
</dbReference>
<dbReference type="PDBsum" id="2LR8"/>
<dbReference type="PDBsum" id="6ANO"/>
<dbReference type="PDBsum" id="6AOZ"/>
<dbReference type="PDBsum" id="6AP0"/>
<dbReference type="BMRB" id="Q9UKL3"/>
<dbReference type="SMR" id="Q9UKL3"/>
<dbReference type="BioGRID" id="115315">
    <property type="interactions" value="52"/>
</dbReference>
<dbReference type="CORUM" id="Q9UKL3"/>
<dbReference type="DIP" id="DIP-40986N"/>
<dbReference type="FunCoup" id="Q9UKL3">
    <property type="interactions" value="584"/>
</dbReference>
<dbReference type="IntAct" id="Q9UKL3">
    <property type="interactions" value="29"/>
</dbReference>
<dbReference type="MINT" id="Q9UKL3"/>
<dbReference type="STRING" id="9606.ENSP00000478179"/>
<dbReference type="GlyCosmos" id="Q9UKL3">
    <property type="glycosylation" value="2 sites, 1 glycan"/>
</dbReference>
<dbReference type="GlyGen" id="Q9UKL3">
    <property type="glycosylation" value="3 sites, 1 O-linked glycan (3 sites)"/>
</dbReference>
<dbReference type="iPTMnet" id="Q9UKL3"/>
<dbReference type="PhosphoSitePlus" id="Q9UKL3"/>
<dbReference type="BioMuta" id="CASP8AP2"/>
<dbReference type="DMDM" id="74721007"/>
<dbReference type="jPOST" id="Q9UKL3"/>
<dbReference type="MassIVE" id="Q9UKL3"/>
<dbReference type="PaxDb" id="9606-ENSP00000478179"/>
<dbReference type="ProteomicsDB" id="84816"/>
<dbReference type="Pumba" id="Q9UKL3"/>
<dbReference type="DNASU" id="9994"/>
<dbReference type="Ensembl" id="ENST00000671703.3">
    <property type="protein sequence ID" value="ENSP00000518371.1"/>
    <property type="gene ID" value="ENSG00000288475.5"/>
</dbReference>
<dbReference type="Ensembl" id="ENST00000713552.1">
    <property type="protein sequence ID" value="ENSP00000518847.1"/>
    <property type="gene ID" value="ENSG00000288475.5"/>
</dbReference>
<dbReference type="GeneID" id="9994"/>
<dbReference type="KEGG" id="hsa:9994"/>
<dbReference type="MANE-Select" id="ENST00000671703.3">
    <property type="protein sequence ID" value="ENSP00000518371.1"/>
    <property type="RefSeq nucleotide sequence ID" value="NM_001137667.2"/>
    <property type="RefSeq protein sequence ID" value="NP_001131139.1"/>
</dbReference>
<dbReference type="AGR" id="HGNC:1510"/>
<dbReference type="CTD" id="9994"/>
<dbReference type="DisGeNET" id="9994"/>
<dbReference type="GeneCards" id="CASP8AP2"/>
<dbReference type="HGNC" id="HGNC:1510">
    <property type="gene designation" value="CASP8AP2"/>
</dbReference>
<dbReference type="MIM" id="606880">
    <property type="type" value="gene"/>
</dbReference>
<dbReference type="neXtProt" id="NX_Q9UKL3"/>
<dbReference type="PharmGKB" id="PA26093"/>
<dbReference type="eggNOG" id="ENOG502QQGD">
    <property type="taxonomic scope" value="Eukaryota"/>
</dbReference>
<dbReference type="InParanoid" id="Q9UKL3"/>
<dbReference type="OrthoDB" id="1938039at2759"/>
<dbReference type="PAN-GO" id="Q9UKL3">
    <property type="GO annotations" value="6 GO annotations based on evolutionary models"/>
</dbReference>
<dbReference type="PhylomeDB" id="Q9UKL3"/>
<dbReference type="PathwayCommons" id="Q9UKL3"/>
<dbReference type="Reactome" id="R-HSA-3899300">
    <property type="pathway name" value="SUMOylation of transcription cofactors"/>
</dbReference>
<dbReference type="SignaLink" id="Q9UKL3"/>
<dbReference type="SIGNOR" id="Q9UKL3"/>
<dbReference type="BioGRID-ORCS" id="9994">
    <property type="hits" value="37 hits in 189 CRISPR screens"/>
</dbReference>
<dbReference type="CD-CODE" id="24B72B50">
    <property type="entry name" value="Histone Locus Body"/>
</dbReference>
<dbReference type="CD-CODE" id="6F24707C">
    <property type="entry name" value="Cajal body"/>
</dbReference>
<dbReference type="ChiTaRS" id="CASP8AP2">
    <property type="organism name" value="human"/>
</dbReference>
<dbReference type="EvolutionaryTrace" id="Q9UKL3"/>
<dbReference type="GeneWiki" id="CASP8AP2"/>
<dbReference type="GenomeRNAi" id="9994"/>
<dbReference type="Pharos" id="Q9UKL3">
    <property type="development level" value="Tbio"/>
</dbReference>
<dbReference type="PRO" id="PR:Q9UKL3"/>
<dbReference type="Proteomes" id="UP000005640">
    <property type="component" value="Unplaced"/>
</dbReference>
<dbReference type="RNAct" id="Q9UKL3">
    <property type="molecule type" value="protein"/>
</dbReference>
<dbReference type="GO" id="GO:0005737">
    <property type="term" value="C:cytoplasm"/>
    <property type="evidence" value="ECO:0000314"/>
    <property type="project" value="UniProtKB"/>
</dbReference>
<dbReference type="GO" id="GO:0005739">
    <property type="term" value="C:mitochondrion"/>
    <property type="evidence" value="ECO:0000314"/>
    <property type="project" value="UniProtKB"/>
</dbReference>
<dbReference type="GO" id="GO:0005654">
    <property type="term" value="C:nucleoplasm"/>
    <property type="evidence" value="ECO:0000304"/>
    <property type="project" value="Reactome"/>
</dbReference>
<dbReference type="GO" id="GO:0005634">
    <property type="term" value="C:nucleus"/>
    <property type="evidence" value="ECO:0000314"/>
    <property type="project" value="UniProtKB"/>
</dbReference>
<dbReference type="GO" id="GO:0016605">
    <property type="term" value="C:PML body"/>
    <property type="evidence" value="ECO:0000314"/>
    <property type="project" value="UniProtKB"/>
</dbReference>
<dbReference type="GO" id="GO:0008656">
    <property type="term" value="F:cysteine-type endopeptidase activator activity involved in apoptotic process"/>
    <property type="evidence" value="ECO:0000250"/>
    <property type="project" value="UniProtKB"/>
</dbReference>
<dbReference type="GO" id="GO:0005123">
    <property type="term" value="F:death receptor binding"/>
    <property type="evidence" value="ECO:0000304"/>
    <property type="project" value="ProtInc"/>
</dbReference>
<dbReference type="GO" id="GO:0016505">
    <property type="term" value="F:peptidase activator activity involved in apoptotic process"/>
    <property type="evidence" value="ECO:0000250"/>
    <property type="project" value="UniProtKB"/>
</dbReference>
<dbReference type="GO" id="GO:0032184">
    <property type="term" value="F:SUMO polymer binding"/>
    <property type="evidence" value="ECO:0000314"/>
    <property type="project" value="UniProtKB"/>
</dbReference>
<dbReference type="GO" id="GO:0003714">
    <property type="term" value="F:transcription corepressor activity"/>
    <property type="evidence" value="ECO:0000314"/>
    <property type="project" value="UniProtKB"/>
</dbReference>
<dbReference type="GO" id="GO:0097190">
    <property type="term" value="P:apoptotic signaling pathway"/>
    <property type="evidence" value="ECO:0000304"/>
    <property type="project" value="ProtInc"/>
</dbReference>
<dbReference type="GO" id="GO:0071260">
    <property type="term" value="P:cellular response to mechanical stimulus"/>
    <property type="evidence" value="ECO:0000270"/>
    <property type="project" value="UniProtKB"/>
</dbReference>
<dbReference type="GO" id="GO:0008625">
    <property type="term" value="P:extrinsic apoptotic signaling pathway via death domain receptors"/>
    <property type="evidence" value="ECO:0000315"/>
    <property type="project" value="UniProtKB"/>
</dbReference>
<dbReference type="GO" id="GO:0036337">
    <property type="term" value="P:Fas signaling pathway"/>
    <property type="evidence" value="ECO:0000315"/>
    <property type="project" value="UniProtKB"/>
</dbReference>
<dbReference type="GO" id="GO:0007165">
    <property type="term" value="P:signal transduction"/>
    <property type="evidence" value="ECO:0000304"/>
    <property type="project" value="ProtInc"/>
</dbReference>
<dbReference type="CDD" id="cd12202">
    <property type="entry name" value="CASP8AP2"/>
    <property type="match status" value="1"/>
</dbReference>
<dbReference type="FunFam" id="1.10.10.60:FF:000265">
    <property type="entry name" value="CASP8-associated protein 2 isoform X1"/>
    <property type="match status" value="1"/>
</dbReference>
<dbReference type="Gene3D" id="1.10.10.60">
    <property type="entry name" value="Homeodomain-like"/>
    <property type="match status" value="1"/>
</dbReference>
<dbReference type="InterPro" id="IPR039674">
    <property type="entry name" value="FLASH"/>
</dbReference>
<dbReference type="InterPro" id="IPR049257">
    <property type="entry name" value="Gon4l/CASP8AP2_myb-like"/>
</dbReference>
<dbReference type="InterPro" id="IPR009057">
    <property type="entry name" value="Homeodomain-like_sf"/>
</dbReference>
<dbReference type="PANTHER" id="PTHR15489:SF2">
    <property type="entry name" value="CASP8-ASSOCIATED PROTEIN 2"/>
    <property type="match status" value="1"/>
</dbReference>
<dbReference type="PANTHER" id="PTHR15489">
    <property type="entry name" value="CASPASE 8 ASSOCIATED PROTEIN 2"/>
    <property type="match status" value="1"/>
</dbReference>
<dbReference type="Pfam" id="PF21227">
    <property type="entry name" value="Myb_DNA-binding_7"/>
    <property type="match status" value="1"/>
</dbReference>
<dbReference type="SUPFAM" id="SSF46689">
    <property type="entry name" value="Homeodomain-like"/>
    <property type="match status" value="1"/>
</dbReference>
<comment type="function">
    <text evidence="4 5 6 7">Participates in TNF-alpha-induced blockade of glucocorticoid receptor (GR) transactivation at the nuclear receptor coactivator level, upstream and independently of NF-kappa-B. Suppresses both NCOA2- and NCOA3-induced enhancement of GR transactivation. Involved in TNF-alpha-induced activation of NF-kappa-B via a TRAF2-dependent pathway. Acts as a downstream mediator for CASP8-induced activation of NF-kappa-B. Required for the activation of CASP8 in FAS-mediated apoptosis. Required for histone gene transcription and progression through S phase.</text>
</comment>
<comment type="subunit">
    <text evidence="4 5 6 7 8 9">Self-associates. Component of the death-inducing signaling complex (DISC) with CASP8, FADD and FAS. Interacts with NCOA2 and NCOA3. Interacts with SRRT. Interacts with TRAF2. Interacts with NPAT. Interacts (via SIM domains) with SUMO1 and SUMO2. Interacts with SP100; may negatively regulate CASP8AP2 export from the nucleus to the cytoplasm.</text>
</comment>
<comment type="interaction">
    <interactant intactId="EBI-2339650">
        <id>Q9UKL3</id>
    </interactant>
    <interactant intactId="EBI-78060">
        <id>Q14790</id>
        <label>CASP8</label>
    </interactant>
    <organismsDiffer>false</organismsDiffer>
    <experiments>3</experiments>
</comment>
<comment type="interaction">
    <interactant intactId="EBI-2339650">
        <id>Q9UKL3</id>
    </interactant>
    <interactant intactId="EBI-629434">
        <id>O75925</id>
        <label>PIAS1</label>
    </interactant>
    <organismsDiffer>false</organismsDiffer>
    <experiments>4</experiments>
</comment>
<comment type="interaction">
    <interactant intactId="EBI-2339650">
        <id>Q9UKL3</id>
    </interactant>
    <interactant intactId="EBI-751145">
        <id>P23497</id>
        <label>SP100</label>
    </interactant>
    <organismsDiffer>false</organismsDiffer>
    <experiments>5</experiments>
</comment>
<comment type="interaction">
    <interactant intactId="EBI-2339650">
        <id>Q9UKL3</id>
    </interactant>
    <interactant intactId="EBI-389619">
        <id>O15350-1</id>
        <label>TP73</label>
    </interactant>
    <organismsDiffer>false</organismsDiffer>
    <experiments>2</experiments>
</comment>
<comment type="subcellular location">
    <subcellularLocation>
        <location>Cytoplasm</location>
    </subcellularLocation>
    <subcellularLocation>
        <location>Nucleus</location>
    </subcellularLocation>
    <subcellularLocation>
        <location>Nucleus</location>
        <location>PML body</location>
    </subcellularLocation>
    <subcellularLocation>
        <location>Mitochondrion</location>
    </subcellularLocation>
    <text>Exported from the nucleus to the mitochondria upon FAS activation.</text>
</comment>
<comment type="induction">
    <text evidence="4">By TNF which induces strong nuclear localization.</text>
</comment>
<comment type="sequence caution" evidence="10">
    <conflict type="miscellaneous discrepancy">
        <sequence resource="EMBL-CDS" id="AAH56685"/>
    </conflict>
    <text>Contaminating sequence. Potential poly-A sequence starting in position 364.</text>
</comment>
<comment type="sequence caution" evidence="10">
    <conflict type="erroneous initiation">
        <sequence resource="EMBL-CDS" id="BAA92067"/>
    </conflict>
    <text>Truncated N-terminus.</text>
</comment>
<sequence>MAADDDNGDGTSLFDVFSASPLKNNDEGSLDIYAGLDSAVSDSASKSCVPSRNCLDLYEEILTEEGTAKEATYNDLQVEYGKCQLQMKELMKKFKEIQTQNFSLINENQSLKKNISALIKTARVEINRKDEEISNLHQRLSEFPHFRNNHKTARTFDTVKTKDLKSRSPHLDDCSKTDHRAKSDVSKDVHHSTSLPNLEKEGKPHSDKRSTSHLPTSVEKHCTNGVWSRSHYQVGEGSSNEDSRRGRKDIRHSQFNRGTERVRKDLSTGCGDGEPRILEASQRLQGHPEKYGKGEPKTESKSSKFKSNSDSDYKGERINSSWEKETPGERSHSRVDSQSDKKLERQSERSQNINRKEVKSQDKEERKVDQKPKSVVKDQDHWRRSERASLPHSKNEITFSHNSSKYHLEERRGWEDCKRDKSVNSHSFQDGRCPSSLSNSRTHKNIDSKEVDAMHQWENTPLKAERHRTEDKRKREQESKEENRHIRNEKRVPTEHLQKTNKETKKTTTDLKKQNEPKTDKGEVLDNGVSEGADNKELAMKAESGPNETKNKDLKLSFMKKLNLTLSPAKKQPVSQDNQHKITDIPKSSGVCDSESSMQVKTVAYVPSISEHILGEAAVSEHTMGETKSTLLEPKVALLAVTEPRIGISETNKEDENSLLVRSVDNTMHCEEPICGTETSFPSPMEIQQTESLFPSTGMKQTINNGRAAAPVVMDVLQTDVSQNFGLELDTKRNDNSDYCGISEGMEMKVALSTTVSETTESILQPSIEEADILPIMLSEDNNPKFEPSVIVTPLVESKSCHLEPCLPKETLDSSLQQTELMDHRMATGETNSVYHDDDNSVLSIDLNHLRPIPEAISPLNSPVRPVAKVLRNESPPQVPVYNNSHKDVFLPNSAHSTSKSQSDLNKENQKPIYKSDKCTEADTCKNSPLDELEEGEIRSDSETSKPQESFEKNSKRRVSADVRKSKTIPRRGKSTVCLDKDSRKTHVRIHQTNNKWNKRPDKSSRSSKTEKKDKVMSTSSLEKIVPIIAVPSSEQEIMHMLRMIRKHVRKNYMKFKAKFSLIQFHRIIESAILSFTSLIKHLNLHKISKSVTTLQKNLCDIIESKLKQVKKNGIVDRLFEQQLPDMKKKLWKFVDDQLDYLFAKLKKILVCDSKSFGRDSDEGKLEKTSKQNAQYSNSQKRSVDNSNRELLKEKLSKSEDPVHYKSLVGCKKSEENYQDQNNSSINTVKHDIKKNFNICFDNIKNSQSEERSLEVHCPSTPKSEKNEGSSIEDAQTSQHATLKPERSFEILTEQQASSLTFNLVSDAQMGEIFKSLLQGSDLLDSSVNCTEKSEWELKTPEKQLLETLKCESIPACTTEELVSGVASPCPKMISDDNWSLLSSEKGPSLSSGLSLPVHPDVLDESCMFEVSTNLPLSKDNVCSVEKSKPCVSSILLEDLAVSLTVPSPLKSDGHLSFLKPDMSSSSTPEEVISAHFSEDALLEEEDASEQDIHLALESDNSSSKSSCSSSWTSRSVAPGFQYHPNLPMHAVIMEKSNDHFIVKIRRATPSTSSGLKQSMMPDELLTSLPRHGKEADEGPEKEYISCQNTVFKSVEELENSNKNVDGSKSTHEEQSSMIQTQVPDIYEFLKDASDKMGHSDEVADECFKLHQVWETKVPESIEELPSMEEISHSVGEHLPNTYVDLTKDPVTETKNLGEFIEVTVLHIDQLGCSGGNLNQSAQILDNSLQADTVGAFIDLTQDASSEAKSEGNHPALAVEDLGCGVIQVDEDNCKEEKAQVANRPLKCIVEETYIDLTTESPSSCEVKKDELKSEPGSNCDNSELPGTLHNSHKKRRNISDLNHPHKKQRKETDLTNKEKTKKPTQDSCENTEAHQKKASKKKAPPVTKDPSSLKATPGIKDSSAALATSTSLSAKNVIKKKGEIIILWTRNDDREILLECQKRGPSFKTFAYLAAKLDKNPNQVSERFQQLMKLFEKSKCR</sequence>
<feature type="initiator methionine" description="Removed" evidence="18">
    <location>
        <position position="1"/>
    </location>
</feature>
<feature type="chain" id="PRO_0000076188" description="CASP8-associated protein 2">
    <location>
        <begin position="2"/>
        <end position="1982"/>
    </location>
</feature>
<feature type="region of interest" description="Disordered" evidence="3">
    <location>
        <begin position="159"/>
        <end position="552"/>
    </location>
</feature>
<feature type="region of interest" description="Disordered" evidence="3">
    <location>
        <begin position="569"/>
        <end position="593"/>
    </location>
</feature>
<feature type="region of interest" description="Disordered" evidence="3">
    <location>
        <begin position="875"/>
        <end position="1017"/>
    </location>
</feature>
<feature type="region of interest" description="Disordered" evidence="3">
    <location>
        <begin position="1157"/>
        <end position="1188"/>
    </location>
</feature>
<feature type="region of interest" description="Disordered" evidence="3">
    <location>
        <begin position="1251"/>
        <end position="1283"/>
    </location>
</feature>
<feature type="region of interest" description="NCOA2-binding" evidence="4">
    <location>
        <begin position="1709"/>
        <end position="1982"/>
    </location>
</feature>
<feature type="region of interest" description="Disordered" evidence="3">
    <location>
        <begin position="1803"/>
        <end position="1909"/>
    </location>
</feature>
<feature type="short sequence motif" description="SUMO interaction motif 1 (SIM); mediates the binding to polysumoylated substrates" evidence="1">
    <location>
        <begin position="1683"/>
        <end position="1687"/>
    </location>
</feature>
<feature type="short sequence motif" description="SUMO interaction motif 2 (SIM); mediates the binding to polysumoylated substrates" evidence="1">
    <location>
        <begin position="1737"/>
        <end position="1741"/>
    </location>
</feature>
<feature type="short sequence motif" description="SUMO interaction motif 3 (SIM); mediates the binding to polysumoylated substrates" evidence="1">
    <location>
        <begin position="1794"/>
        <end position="1798"/>
    </location>
</feature>
<feature type="compositionally biased region" description="Basic and acidic residues" evidence="3">
    <location>
        <begin position="159"/>
        <end position="191"/>
    </location>
</feature>
<feature type="compositionally biased region" description="Basic and acidic residues" evidence="3">
    <location>
        <begin position="198"/>
        <end position="210"/>
    </location>
</feature>
<feature type="compositionally biased region" description="Polar residues" evidence="3">
    <location>
        <begin position="225"/>
        <end position="240"/>
    </location>
</feature>
<feature type="compositionally biased region" description="Basic and acidic residues" evidence="3">
    <location>
        <begin position="286"/>
        <end position="395"/>
    </location>
</feature>
<feature type="compositionally biased region" description="Polar residues" evidence="3">
    <location>
        <begin position="396"/>
        <end position="405"/>
    </location>
</feature>
<feature type="compositionally biased region" description="Basic and acidic residues" evidence="3">
    <location>
        <begin position="406"/>
        <end position="423"/>
    </location>
</feature>
<feature type="compositionally biased region" description="Basic and acidic residues" evidence="3">
    <location>
        <begin position="444"/>
        <end position="455"/>
    </location>
</feature>
<feature type="compositionally biased region" description="Basic and acidic residues" evidence="3">
    <location>
        <begin position="463"/>
        <end position="524"/>
    </location>
</feature>
<feature type="compositionally biased region" description="Polar residues" evidence="3">
    <location>
        <begin position="894"/>
        <end position="904"/>
    </location>
</feature>
<feature type="compositionally biased region" description="Basic and acidic residues" evidence="3">
    <location>
        <begin position="905"/>
        <end position="924"/>
    </location>
</feature>
<feature type="compositionally biased region" description="Basic and acidic residues" evidence="3">
    <location>
        <begin position="936"/>
        <end position="965"/>
    </location>
</feature>
<feature type="compositionally biased region" description="Basic and acidic residues" evidence="3">
    <location>
        <begin position="999"/>
        <end position="1016"/>
    </location>
</feature>
<feature type="compositionally biased region" description="Basic and acidic residues" evidence="3">
    <location>
        <begin position="1157"/>
        <end position="1170"/>
    </location>
</feature>
<feature type="compositionally biased region" description="Polar residues" evidence="3">
    <location>
        <begin position="1171"/>
        <end position="1181"/>
    </location>
</feature>
<feature type="compositionally biased region" description="Polar residues" evidence="3">
    <location>
        <begin position="1269"/>
        <end position="1281"/>
    </location>
</feature>
<feature type="compositionally biased region" description="Basic and acidic residues" evidence="3">
    <location>
        <begin position="1851"/>
        <end position="1865"/>
    </location>
</feature>
<feature type="modified residue" description="N-acetylalanine" evidence="18">
    <location>
        <position position="2"/>
    </location>
</feature>
<feature type="modified residue" description="Phosphoserine" evidence="18 19">
    <location>
        <position position="20"/>
    </location>
</feature>
<feature type="modified residue" description="Phosphoserine" evidence="19">
    <location>
        <position position="194"/>
    </location>
</feature>
<feature type="modified residue" description="Phosphoserine" evidence="19">
    <location>
        <position position="567"/>
    </location>
</feature>
<feature type="modified residue" description="Phosphoserine" evidence="19">
    <location>
        <position position="658"/>
    </location>
</feature>
<feature type="modified residue" description="Phosphoserine" evidence="19">
    <location>
        <position position="815"/>
    </location>
</feature>
<feature type="modified residue" description="Phosphoserine" evidence="19">
    <location>
        <position position="875"/>
    </location>
</feature>
<feature type="modified residue" description="Phosphoserine" evidence="19">
    <location>
        <position position="940"/>
    </location>
</feature>
<feature type="modified residue" description="Phosphoserine" evidence="19">
    <location>
        <position position="1161"/>
    </location>
</feature>
<feature type="modified residue" description="N6-acetyllysine" evidence="2">
    <location>
        <position position="1343"/>
    </location>
</feature>
<feature type="sequence variant" id="VAR_050700" description="In dbSNP:rs3799896.">
    <original>P</original>
    <variation>S</variation>
    <location>
        <position position="1659"/>
    </location>
</feature>
<feature type="sequence conflict" description="In Ref. 2; AAD45537." evidence="10" ref="2">
    <original>L</original>
    <variation>S</variation>
    <location>
        <position position="278"/>
    </location>
</feature>
<feature type="sequence conflict" description="In Ref. 7; AAH56685." evidence="10" ref="7">
    <original>D</original>
    <variation>E</variation>
    <location>
        <position position="362"/>
    </location>
</feature>
<feature type="sequence conflict" description="In Ref. 2; AAD45537." evidence="10" ref="2">
    <original>L</original>
    <variation>P</variation>
    <location>
        <position position="638"/>
    </location>
</feature>
<feature type="sequence conflict" description="In Ref. 2; AAD45537." evidence="10" ref="2">
    <original>M</original>
    <variation>T</variation>
    <location>
        <position position="668"/>
    </location>
</feature>
<feature type="sequence conflict" description="In Ref. 2; AAD45537." evidence="10" ref="2">
    <original>N</original>
    <variation>S</variation>
    <location>
        <position position="861"/>
    </location>
</feature>
<feature type="sequence conflict" description="In Ref. 2; AAD45537." evidence="10" ref="2">
    <original>C</original>
    <variation>Y</variation>
    <location>
        <position position="1713"/>
    </location>
</feature>
<feature type="sequence conflict" description="In Ref. 3; BAA92553." evidence="10" ref="3">
    <location>
        <position position="1754"/>
    </location>
</feature>
<feature type="sequence conflict" description="In Ref. 8; BAA92067." evidence="10" ref="8">
    <original>S</original>
    <variation>P</variation>
    <location>
        <position position="1832"/>
    </location>
</feature>
<feature type="helix" evidence="21">
    <location>
        <begin position="73"/>
        <end position="137"/>
    </location>
</feature>
<feature type="strand" evidence="20">
    <location>
        <begin position="1925"/>
        <end position="1927"/>
    </location>
</feature>
<feature type="helix" evidence="20">
    <location>
        <begin position="1931"/>
        <end position="1943"/>
    </location>
</feature>
<feature type="helix" evidence="20">
    <location>
        <begin position="1948"/>
        <end position="1958"/>
    </location>
</feature>
<feature type="helix" evidence="20">
    <location>
        <begin position="1962"/>
        <end position="1977"/>
    </location>
</feature>
<evidence type="ECO:0000250" key="1"/>
<evidence type="ECO:0000250" key="2">
    <source>
        <dbReference type="UniProtKB" id="Q9WUF3"/>
    </source>
</evidence>
<evidence type="ECO:0000256" key="3">
    <source>
        <dbReference type="SAM" id="MobiDB-lite"/>
    </source>
</evidence>
<evidence type="ECO:0000269" key="4">
    <source>
    </source>
</evidence>
<evidence type="ECO:0000269" key="5">
    <source>
    </source>
</evidence>
<evidence type="ECO:0000269" key="6">
    <source>
    </source>
</evidence>
<evidence type="ECO:0000269" key="7">
    <source>
    </source>
</evidence>
<evidence type="ECO:0000269" key="8">
    <source>
    </source>
</evidence>
<evidence type="ECO:0000269" key="9">
    <source>
    </source>
</evidence>
<evidence type="ECO:0000305" key="10"/>
<evidence type="ECO:0000312" key="11">
    <source>
        <dbReference type="EMBL" id="AAD45537.2"/>
    </source>
</evidence>
<evidence type="ECO:0000312" key="12">
    <source>
        <dbReference type="EMBL" id="AAF03367.1"/>
    </source>
</evidence>
<evidence type="ECO:0000312" key="13">
    <source>
        <dbReference type="EMBL" id="AAH42577.1"/>
    </source>
</evidence>
<evidence type="ECO:0000312" key="14">
    <source>
        <dbReference type="EMBL" id="AAH56685.1"/>
    </source>
</evidence>
<evidence type="ECO:0000312" key="15">
    <source>
        <dbReference type="EMBL" id="BAA92067.1"/>
    </source>
</evidence>
<evidence type="ECO:0000312" key="16">
    <source>
        <dbReference type="EMBL" id="BAA92553.2"/>
    </source>
</evidence>
<evidence type="ECO:0000312" key="17">
    <source>
        <dbReference type="HGNC" id="HGNC:1510"/>
    </source>
</evidence>
<evidence type="ECO:0007744" key="18">
    <source>
    </source>
</evidence>
<evidence type="ECO:0007744" key="19">
    <source>
    </source>
</evidence>
<evidence type="ECO:0007829" key="20">
    <source>
        <dbReference type="PDB" id="2LR8"/>
    </source>
</evidence>
<evidence type="ECO:0007829" key="21">
    <source>
        <dbReference type="PDB" id="6AOZ"/>
    </source>
</evidence>
<organism>
    <name type="scientific">Homo sapiens</name>
    <name type="common">Human</name>
    <dbReference type="NCBI Taxonomy" id="9606"/>
    <lineage>
        <taxon>Eukaryota</taxon>
        <taxon>Metazoa</taxon>
        <taxon>Chordata</taxon>
        <taxon>Craniata</taxon>
        <taxon>Vertebrata</taxon>
        <taxon>Euteleostomi</taxon>
        <taxon>Mammalia</taxon>
        <taxon>Eutheria</taxon>
        <taxon>Euarchontoglires</taxon>
        <taxon>Primates</taxon>
        <taxon>Haplorrhini</taxon>
        <taxon>Catarrhini</taxon>
        <taxon>Hominidae</taxon>
        <taxon>Homo</taxon>
    </lineage>
</organism>
<gene>
    <name evidence="17" type="primary">CASP8AP2</name>
    <name type="synonym">FLASH</name>
    <name evidence="16" type="synonym">KIAA1315</name>
    <name evidence="11" type="synonym">RIP25</name>
</gene>
<proteinExistence type="evidence at protein level"/>
<name>C8AP2_HUMAN</name>
<keyword id="KW-0002">3D-structure</keyword>
<keyword id="KW-0007">Acetylation</keyword>
<keyword id="KW-0010">Activator</keyword>
<keyword id="KW-0053">Apoptosis</keyword>
<keyword id="KW-0131">Cell cycle</keyword>
<keyword id="KW-0963">Cytoplasm</keyword>
<keyword id="KW-0496">Mitochondrion</keyword>
<keyword id="KW-0539">Nucleus</keyword>
<keyword id="KW-0597">Phosphoprotein</keyword>
<keyword id="KW-1267">Proteomics identification</keyword>
<keyword id="KW-1185">Reference proteome</keyword>
<keyword id="KW-0678">Repressor</keyword>
<keyword id="KW-0804">Transcription</keyword>
<keyword id="KW-0805">Transcription regulation</keyword>
<protein>
    <recommendedName>
        <fullName>CASP8-associated protein 2</fullName>
    </recommendedName>
    <alternativeName>
        <fullName>FLICE-associated huge protein</fullName>
    </alternativeName>
</protein>